<accession>V5IMN1</accession>
<accession>V5IPE9</accession>
<feature type="chain" id="PRO_0000458605" description="Large ribosomal subunit protein uL4m">
    <location>
        <begin position="1"/>
        <end position="325"/>
    </location>
</feature>
<feature type="region of interest" description="Disordered" evidence="1">
    <location>
        <begin position="113"/>
        <end position="158"/>
    </location>
</feature>
<feature type="splice variant" id="VSP_061956" description="In isoform 2.">
    <original>I</original>
    <variation>SMSTNTTANLDNIARAGKVLTHDSV</variation>
    <location>
        <position position="62"/>
    </location>
</feature>
<comment type="function">
    <text evidence="6">Component of the mitochondrial ribosome (mitoribosome), a dedicated translation machinery responsible for the synthesis of mitochondrial genome-encoded proteins, including at least some of the essential transmembrane subunits of the mitochondrial respiratory chain. The mitoribosomes are attached to the mitochondrial inner membrane and translation products are cotranslationally integrated into the membrane.</text>
</comment>
<comment type="subunit">
    <text evidence="2 3">Component of the mitochondrial large ribosomal subunit (mt-LSU). Mature N.crassa 74S mitochondrial ribosomes consist of a small (37S) and a large (54S) subunit. The 37S small subunit contains a 16S ribosomal RNA (16S mt-rRNA) and 32 different proteins. The 54S large subunit contains a 23S rRNA (23S mt-rRNA) and 42 different proteins.</text>
</comment>
<comment type="subcellular location">
    <subcellularLocation>
        <location evidence="2 3">Mitochondrion</location>
    </subcellularLocation>
</comment>
<comment type="alternative products">
    <event type="alternative splicing"/>
    <isoform>
        <id>V5IMN1-1</id>
        <name>1</name>
        <sequence type="displayed"/>
    </isoform>
    <isoform>
        <id>V5IMN1-2</id>
        <name>2</name>
        <sequence type="described" ref="VSP_061956"/>
    </isoform>
</comment>
<comment type="similarity">
    <text evidence="5">Belongs to the universal ribosomal protein uL4 family.</text>
</comment>
<sequence>MAGKGLKSLNEAMNALSIASKSCRALPMRQSSILPCRRSMASVATPPAANITRSVSEPWQPITNVPVTVYSFPELEPRSLESYSARHLHLPLRRDILHLAVIYEGDSTRRGMASTKTRYEVHGSHKKMSPQKGTGNARRGTRQSPLMKGGGKTFGPKPRDFSTKLNKKVYDLAWRTALSYRYKRGELIVTEDGLDLPLPNDFLWLAGGGKLSRELEDGYVRKWVHEFMTSLNWGKEAGRTTFITGDKRPNLFTGFELAGAEGRALELWDVDVKDLLETGRIVIERSALKEMIEDHQSDLVTRVAVQGLRQKGPNLGEVLVRAPRY</sequence>
<evidence type="ECO:0000256" key="1">
    <source>
        <dbReference type="SAM" id="MobiDB-lite"/>
    </source>
</evidence>
<evidence type="ECO:0000269" key="2">
    <source>
    </source>
</evidence>
<evidence type="ECO:0000269" key="3">
    <source>
    </source>
</evidence>
<evidence type="ECO:0000303" key="4">
    <source>
    </source>
</evidence>
<evidence type="ECO:0000305" key="5"/>
<evidence type="ECO:0000305" key="6">
    <source>
    </source>
</evidence>
<evidence type="ECO:0007744" key="7">
    <source>
        <dbReference type="PDB" id="6YWE"/>
    </source>
</evidence>
<evidence type="ECO:0007744" key="8">
    <source>
        <dbReference type="PDB" id="6YWS"/>
    </source>
</evidence>
<name>RL4P_NEUCR</name>
<organism>
    <name type="scientific">Neurospora crassa (strain ATCC 24698 / 74-OR23-1A / CBS 708.71 / DSM 1257 / FGSC 987)</name>
    <dbReference type="NCBI Taxonomy" id="367110"/>
    <lineage>
        <taxon>Eukaryota</taxon>
        <taxon>Fungi</taxon>
        <taxon>Dikarya</taxon>
        <taxon>Ascomycota</taxon>
        <taxon>Pezizomycotina</taxon>
        <taxon>Sordariomycetes</taxon>
        <taxon>Sordariomycetidae</taxon>
        <taxon>Sordariales</taxon>
        <taxon>Sordariaceae</taxon>
        <taxon>Neurospora</taxon>
    </lineage>
</organism>
<proteinExistence type="evidence at protein level"/>
<reference key="1">
    <citation type="journal article" date="2003" name="Nature">
        <title>The genome sequence of the filamentous fungus Neurospora crassa.</title>
        <authorList>
            <person name="Galagan J.E."/>
            <person name="Calvo S.E."/>
            <person name="Borkovich K.A."/>
            <person name="Selker E.U."/>
            <person name="Read N.D."/>
            <person name="Jaffe D.B."/>
            <person name="FitzHugh W."/>
            <person name="Ma L.-J."/>
            <person name="Smirnov S."/>
            <person name="Purcell S."/>
            <person name="Rehman B."/>
            <person name="Elkins T."/>
            <person name="Engels R."/>
            <person name="Wang S."/>
            <person name="Nielsen C.B."/>
            <person name="Butler J."/>
            <person name="Endrizzi M."/>
            <person name="Qui D."/>
            <person name="Ianakiev P."/>
            <person name="Bell-Pedersen D."/>
            <person name="Nelson M.A."/>
            <person name="Werner-Washburne M."/>
            <person name="Selitrennikoff C.P."/>
            <person name="Kinsey J.A."/>
            <person name="Braun E.L."/>
            <person name="Zelter A."/>
            <person name="Schulte U."/>
            <person name="Kothe G.O."/>
            <person name="Jedd G."/>
            <person name="Mewes H.-W."/>
            <person name="Staben C."/>
            <person name="Marcotte E."/>
            <person name="Greenberg D."/>
            <person name="Roy A."/>
            <person name="Foley K."/>
            <person name="Naylor J."/>
            <person name="Stange-Thomann N."/>
            <person name="Barrett R."/>
            <person name="Gnerre S."/>
            <person name="Kamal M."/>
            <person name="Kamvysselis M."/>
            <person name="Mauceli E.W."/>
            <person name="Bielke C."/>
            <person name="Rudd S."/>
            <person name="Frishman D."/>
            <person name="Krystofova S."/>
            <person name="Rasmussen C."/>
            <person name="Metzenberg R.L."/>
            <person name="Perkins D.D."/>
            <person name="Kroken S."/>
            <person name="Cogoni C."/>
            <person name="Macino G."/>
            <person name="Catcheside D.E.A."/>
            <person name="Li W."/>
            <person name="Pratt R.J."/>
            <person name="Osmani S.A."/>
            <person name="DeSouza C.P.C."/>
            <person name="Glass N.L."/>
            <person name="Orbach M.J."/>
            <person name="Berglund J.A."/>
            <person name="Voelker R."/>
            <person name="Yarden O."/>
            <person name="Plamann M."/>
            <person name="Seiler S."/>
            <person name="Dunlap J.C."/>
            <person name="Radford A."/>
            <person name="Aramayo R."/>
            <person name="Natvig D.O."/>
            <person name="Alex L.A."/>
            <person name="Mannhaupt G."/>
            <person name="Ebbole D.J."/>
            <person name="Freitag M."/>
            <person name="Paulsen I."/>
            <person name="Sachs M.S."/>
            <person name="Lander E.S."/>
            <person name="Nusbaum C."/>
            <person name="Birren B.W."/>
        </authorList>
    </citation>
    <scope>NUCLEOTIDE SEQUENCE [LARGE SCALE GENOMIC DNA] (ISOFORMS 1 AND 2)</scope>
    <source>
        <strain>ATCC 24698 / 74-OR23-1A / CBS 708.71 / DSM 1257 / FGSC 987</strain>
    </source>
</reference>
<reference key="2">
    <citation type="journal article" date="2006" name="FEMS Microbiol. Lett.">
        <title>Identification and comparative analysis of the large subunit mitochondrial ribosomal proteins of Neurospora crassa.</title>
        <authorList>
            <person name="Gan X."/>
            <person name="Arita K."/>
            <person name="Isono S."/>
            <person name="Kitakawa M."/>
            <person name="Yoshino K."/>
            <person name="Yonezawa K."/>
            <person name="Kato A."/>
            <person name="Inoue H."/>
            <person name="Isono K."/>
        </authorList>
    </citation>
    <scope>IDENTIFICATION IN THE MITOCHONDRIAL RIBOSOMAL LARGE COMPLEX</scope>
    <scope>IDENTIFICATION BY MASS SPECTROMETRY</scope>
</reference>
<reference evidence="7 8" key="3">
    <citation type="journal article" date="2020" name="Nat. Commun.">
        <title>Analysis of translating mitoribosome reveals functional characteristics of translation in mitochondria of fungi.</title>
        <authorList>
            <person name="Itoh Y."/>
            <person name="Naschberger A."/>
            <person name="Mortezaei N."/>
            <person name="Herrmann J.M."/>
            <person name="Amunts A."/>
        </authorList>
    </citation>
    <scope>STRUCTURE BY ELECTRON MICROSCOPY (2.74 ANGSTROMS)</scope>
</reference>
<protein>
    <recommendedName>
        <fullName evidence="4">Large ribosomal subunit protein uL4m</fullName>
    </recommendedName>
</protein>
<keyword id="KW-0002">3D-structure</keyword>
<keyword id="KW-0025">Alternative splicing</keyword>
<keyword id="KW-0496">Mitochondrion</keyword>
<keyword id="KW-1185">Reference proteome</keyword>
<keyword id="KW-0687">Ribonucleoprotein</keyword>
<keyword id="KW-0689">Ribosomal protein</keyword>
<dbReference type="EMBL" id="CM002240">
    <property type="protein sequence ID" value="ESA42615.1"/>
    <property type="molecule type" value="Genomic_DNA"/>
</dbReference>
<dbReference type="EMBL" id="CM002240">
    <property type="protein sequence ID" value="ESA42616.1"/>
    <property type="molecule type" value="Genomic_DNA"/>
</dbReference>
<dbReference type="RefSeq" id="XP_011394547.1">
    <molecule id="V5IMN1-1"/>
    <property type="nucleotide sequence ID" value="XM_011396245.1"/>
</dbReference>
<dbReference type="RefSeq" id="XP_011394548.1">
    <molecule id="V5IMN1-2"/>
    <property type="nucleotide sequence ID" value="XM_011396246.1"/>
</dbReference>
<dbReference type="PDB" id="6YWE">
    <property type="method" value="EM"/>
    <property type="resolution" value="2.99 A"/>
    <property type="chains" value="D=1-325"/>
</dbReference>
<dbReference type="PDB" id="6YWS">
    <property type="method" value="EM"/>
    <property type="resolution" value="2.74 A"/>
    <property type="chains" value="D=1-325"/>
</dbReference>
<dbReference type="PDB" id="6YWV">
    <property type="method" value="EM"/>
    <property type="resolution" value="3.03 A"/>
    <property type="chains" value="D=1-325"/>
</dbReference>
<dbReference type="PDB" id="6YWX">
    <property type="method" value="EM"/>
    <property type="resolution" value="3.10 A"/>
    <property type="chains" value="D=1-325"/>
</dbReference>
<dbReference type="PDB" id="6YWY">
    <property type="method" value="EM"/>
    <property type="resolution" value="3.05 A"/>
    <property type="chains" value="D=1-325"/>
</dbReference>
<dbReference type="PDBsum" id="6YWE"/>
<dbReference type="PDBsum" id="6YWS"/>
<dbReference type="PDBsum" id="6YWV"/>
<dbReference type="PDBsum" id="6YWX"/>
<dbReference type="PDBsum" id="6YWY"/>
<dbReference type="EMDB" id="EMD-10965"/>
<dbReference type="EMDB" id="EMD-10973"/>
<dbReference type="EMDB" id="EMD-10977"/>
<dbReference type="EMDB" id="EMD-10978"/>
<dbReference type="EMDB" id="EMD-10985"/>
<dbReference type="SMR" id="V5IMN1"/>
<dbReference type="STRING" id="367110.V5IPE9"/>
<dbReference type="PaxDb" id="5141-EFNCRP00000007594"/>
<dbReference type="EnsemblFungi" id="ESA42615">
    <molecule id="V5IMN1-1"/>
    <property type="protein sequence ID" value="ESA42615"/>
    <property type="gene ID" value="NCU01474"/>
</dbReference>
<dbReference type="EnsemblFungi" id="ESA42616">
    <molecule id="V5IMN1-2"/>
    <property type="protein sequence ID" value="ESA42616"/>
    <property type="gene ID" value="NCU01474"/>
</dbReference>
<dbReference type="GeneID" id="3872899"/>
<dbReference type="KEGG" id="ncr:NCU01474"/>
<dbReference type="VEuPathDB" id="FungiDB:NCU01474"/>
<dbReference type="HOGENOM" id="CLU_041575_4_0_1"/>
<dbReference type="OMA" id="KTFGPHP"/>
<dbReference type="OrthoDB" id="275876at2759"/>
<dbReference type="Proteomes" id="UP000001805">
    <property type="component" value="Chromosome 2, Linkage Group V"/>
</dbReference>
<dbReference type="GO" id="GO:0005739">
    <property type="term" value="C:mitochondrion"/>
    <property type="evidence" value="ECO:0007669"/>
    <property type="project" value="UniProtKB-SubCell"/>
</dbReference>
<dbReference type="GO" id="GO:1990904">
    <property type="term" value="C:ribonucleoprotein complex"/>
    <property type="evidence" value="ECO:0007669"/>
    <property type="project" value="UniProtKB-KW"/>
</dbReference>
<dbReference type="GO" id="GO:0005840">
    <property type="term" value="C:ribosome"/>
    <property type="evidence" value="ECO:0007669"/>
    <property type="project" value="UniProtKB-KW"/>
</dbReference>
<dbReference type="GO" id="GO:0003735">
    <property type="term" value="F:structural constituent of ribosome"/>
    <property type="evidence" value="ECO:0007669"/>
    <property type="project" value="InterPro"/>
</dbReference>
<dbReference type="GO" id="GO:0006412">
    <property type="term" value="P:translation"/>
    <property type="evidence" value="ECO:0007669"/>
    <property type="project" value="InterPro"/>
</dbReference>
<dbReference type="FunFam" id="3.40.1370.10:FF:000016">
    <property type="entry name" value="60S ribosomal protein L4, mitochondrial"/>
    <property type="match status" value="1"/>
</dbReference>
<dbReference type="Gene3D" id="3.40.1370.10">
    <property type="match status" value="1"/>
</dbReference>
<dbReference type="InterPro" id="IPR002136">
    <property type="entry name" value="Ribosomal_uL4"/>
</dbReference>
<dbReference type="InterPro" id="IPR013005">
    <property type="entry name" value="Ribosomal_uL4-like"/>
</dbReference>
<dbReference type="InterPro" id="IPR023574">
    <property type="entry name" value="Ribosomal_uL4_dom_sf"/>
</dbReference>
<dbReference type="PANTHER" id="PTHR10746">
    <property type="entry name" value="50S RIBOSOMAL PROTEIN L4"/>
    <property type="match status" value="1"/>
</dbReference>
<dbReference type="PANTHER" id="PTHR10746:SF6">
    <property type="entry name" value="LARGE RIBOSOMAL SUBUNIT PROTEIN UL4M"/>
    <property type="match status" value="1"/>
</dbReference>
<dbReference type="Pfam" id="PF00573">
    <property type="entry name" value="Ribosomal_L4"/>
    <property type="match status" value="1"/>
</dbReference>
<dbReference type="SUPFAM" id="SSF52166">
    <property type="entry name" value="Ribosomal protein L4"/>
    <property type="match status" value="1"/>
</dbReference>
<gene>
    <name type="primary">yml6</name>
    <name type="ORF">NCU01474</name>
</gene>